<evidence type="ECO:0000255" key="1">
    <source>
        <dbReference type="HAMAP-Rule" id="MF_00536"/>
    </source>
</evidence>
<evidence type="ECO:0000305" key="2"/>
<evidence type="ECO:0007829" key="3">
    <source>
        <dbReference type="PDB" id="3LXY"/>
    </source>
</evidence>
<comment type="function">
    <text evidence="1">Catalyzes the NAD(P)-dependent oxidation of 4-(phosphooxy)-L-threonine (HTP) into 2-amino-3-oxo-4-(phosphooxy)butyric acid which spontaneously decarboxylates to form 3-amino-2-oxopropyl phosphate (AHAP).</text>
</comment>
<comment type="catalytic activity">
    <reaction evidence="1">
        <text>4-(phosphooxy)-L-threonine + NAD(+) = 3-amino-2-oxopropyl phosphate + CO2 + NADH</text>
        <dbReference type="Rhea" id="RHEA:32275"/>
        <dbReference type="ChEBI" id="CHEBI:16526"/>
        <dbReference type="ChEBI" id="CHEBI:57279"/>
        <dbReference type="ChEBI" id="CHEBI:57540"/>
        <dbReference type="ChEBI" id="CHEBI:57945"/>
        <dbReference type="ChEBI" id="CHEBI:58452"/>
        <dbReference type="EC" id="1.1.1.262"/>
    </reaction>
</comment>
<comment type="cofactor">
    <cofactor evidence="1">
        <name>Zn(2+)</name>
        <dbReference type="ChEBI" id="CHEBI:29105"/>
    </cofactor>
    <cofactor evidence="1">
        <name>Mg(2+)</name>
        <dbReference type="ChEBI" id="CHEBI:18420"/>
    </cofactor>
    <cofactor evidence="1">
        <name>Co(2+)</name>
        <dbReference type="ChEBI" id="CHEBI:48828"/>
    </cofactor>
    <text evidence="1">Binds 1 divalent metal cation per subunit. Can use ions such as Zn(2+), Mg(2+) or Co(2+).</text>
</comment>
<comment type="pathway">
    <text evidence="1">Cofactor biosynthesis; pyridoxine 5'-phosphate biosynthesis; pyridoxine 5'-phosphate from D-erythrose 4-phosphate: step 4/5.</text>
</comment>
<comment type="subunit">
    <text evidence="1">Homodimer.</text>
</comment>
<comment type="subcellular location">
    <subcellularLocation>
        <location evidence="1">Cytoplasm</location>
    </subcellularLocation>
</comment>
<comment type="miscellaneous">
    <text evidence="1">The active site is located at the dimer interface.</text>
</comment>
<comment type="similarity">
    <text evidence="1">Belongs to the PdxA family.</text>
</comment>
<comment type="sequence caution" evidence="2">
    <conflict type="erroneous initiation">
        <sequence resource="EMBL-CDS" id="AAM87230"/>
    </conflict>
</comment>
<comment type="sequence caution" evidence="2">
    <conflict type="erroneous initiation">
        <sequence resource="EMBL-CDS" id="AAS63834"/>
    </conflict>
</comment>
<accession>P58719</accession>
<accession>Q0WJH2</accession>
<name>PDXA_YERPE</name>
<proteinExistence type="evidence at protein level"/>
<sequence>MHNHNNRLVITPGEPAGVGPDLAITLAQQDWPVELVVCADPALLLARASQLNLPLQLREYQADQPAIAQQAGSLTILPVKTAVNVVPGKLDVGNSHYVVETLAKACDGAISGEFAALVTGPVQKSIINDAGIPFIGHTEFFADRSHCQRVVMMLATEELRVALATTHLPLLAVPGAITQASLHEVITILDNDLKTKFGITQPQIYVCGLNPHAGEGGHMGHEEIDTIIPALNTLRQQGINLIGPLPADTLFQPKYLQHADAVLAMYHDQGLPVLKYQGFGRAVNITLGLPFIRTSVDHGTALELAATGTADVGSFITALNLAIKMINNSNE</sequence>
<feature type="chain" id="PRO_0000188841" description="4-hydroxythreonine-4-phosphate dehydrogenase">
    <location>
        <begin position="1"/>
        <end position="331"/>
    </location>
</feature>
<feature type="binding site" evidence="1">
    <location>
        <position position="137"/>
    </location>
    <ligand>
        <name>substrate</name>
    </ligand>
</feature>
<feature type="binding site" evidence="1">
    <location>
        <position position="138"/>
    </location>
    <ligand>
        <name>substrate</name>
    </ligand>
</feature>
<feature type="binding site" evidence="1">
    <location>
        <position position="167"/>
    </location>
    <ligand>
        <name>a divalent metal cation</name>
        <dbReference type="ChEBI" id="CHEBI:60240"/>
        <note>ligand shared between dimeric partners</note>
    </ligand>
</feature>
<feature type="binding site" evidence="1">
    <location>
        <position position="212"/>
    </location>
    <ligand>
        <name>a divalent metal cation</name>
        <dbReference type="ChEBI" id="CHEBI:60240"/>
        <note>ligand shared between dimeric partners</note>
    </ligand>
</feature>
<feature type="binding site" evidence="1">
    <location>
        <position position="267"/>
    </location>
    <ligand>
        <name>a divalent metal cation</name>
        <dbReference type="ChEBI" id="CHEBI:60240"/>
        <note>ligand shared between dimeric partners</note>
    </ligand>
</feature>
<feature type="binding site" evidence="1">
    <location>
        <position position="275"/>
    </location>
    <ligand>
        <name>substrate</name>
    </ligand>
</feature>
<feature type="binding site" evidence="1">
    <location>
        <position position="284"/>
    </location>
    <ligand>
        <name>substrate</name>
    </ligand>
</feature>
<feature type="binding site" evidence="1">
    <location>
        <position position="293"/>
    </location>
    <ligand>
        <name>substrate</name>
    </ligand>
</feature>
<feature type="strand" evidence="3">
    <location>
        <begin position="6"/>
        <end position="11"/>
    </location>
</feature>
<feature type="helix" evidence="3">
    <location>
        <begin position="19"/>
        <end position="26"/>
    </location>
</feature>
<feature type="strand" evidence="3">
    <location>
        <begin position="32"/>
        <end position="39"/>
    </location>
</feature>
<feature type="helix" evidence="3">
    <location>
        <begin position="41"/>
        <end position="50"/>
    </location>
</feature>
<feature type="strand" evidence="3">
    <location>
        <begin position="56"/>
        <end position="59"/>
    </location>
</feature>
<feature type="strand" evidence="3">
    <location>
        <begin position="73"/>
        <end position="78"/>
    </location>
</feature>
<feature type="helix" evidence="3">
    <location>
        <begin position="92"/>
        <end position="94"/>
    </location>
</feature>
<feature type="helix" evidence="3">
    <location>
        <begin position="95"/>
        <end position="111"/>
    </location>
</feature>
<feature type="strand" evidence="3">
    <location>
        <begin position="112"/>
        <end position="115"/>
    </location>
</feature>
<feature type="strand" evidence="3">
    <location>
        <begin position="117"/>
        <end position="119"/>
    </location>
</feature>
<feature type="helix" evidence="3">
    <location>
        <begin position="124"/>
        <end position="129"/>
    </location>
</feature>
<feature type="helix" evidence="3">
    <location>
        <begin position="137"/>
        <end position="145"/>
    </location>
</feature>
<feature type="strand" evidence="3">
    <location>
        <begin position="151"/>
        <end position="156"/>
    </location>
</feature>
<feature type="strand" evidence="3">
    <location>
        <begin position="159"/>
        <end position="165"/>
    </location>
</feature>
<feature type="helix" evidence="3">
    <location>
        <begin position="170"/>
        <end position="172"/>
    </location>
</feature>
<feature type="helix" evidence="3">
    <location>
        <begin position="173"/>
        <end position="176"/>
    </location>
</feature>
<feature type="helix" evidence="3">
    <location>
        <begin position="179"/>
        <end position="195"/>
    </location>
</feature>
<feature type="strand" evidence="3">
    <location>
        <begin position="204"/>
        <end position="207"/>
    </location>
</feature>
<feature type="helix" evidence="3">
    <location>
        <begin position="211"/>
        <end position="217"/>
    </location>
</feature>
<feature type="helix" evidence="3">
    <location>
        <begin position="222"/>
        <end position="225"/>
    </location>
</feature>
<feature type="helix" evidence="3">
    <location>
        <begin position="227"/>
        <end position="236"/>
    </location>
</feature>
<feature type="strand" evidence="3">
    <location>
        <begin position="241"/>
        <end position="245"/>
    </location>
</feature>
<feature type="helix" evidence="3">
    <location>
        <begin position="247"/>
        <end position="250"/>
    </location>
</feature>
<feature type="helix" evidence="3">
    <location>
        <begin position="253"/>
        <end position="256"/>
    </location>
</feature>
<feature type="strand" evidence="3">
    <location>
        <begin position="260"/>
        <end position="266"/>
    </location>
</feature>
<feature type="helix" evidence="3">
    <location>
        <begin position="267"/>
        <end position="278"/>
    </location>
</feature>
<feature type="strand" evidence="3">
    <location>
        <begin position="283"/>
        <end position="291"/>
    </location>
</feature>
<feature type="strand" evidence="3">
    <location>
        <begin position="293"/>
        <end position="298"/>
    </location>
</feature>
<feature type="helix" evidence="3">
    <location>
        <begin position="302"/>
        <end position="304"/>
    </location>
</feature>
<feature type="turn" evidence="3">
    <location>
        <begin position="305"/>
        <end position="307"/>
    </location>
</feature>
<feature type="helix" evidence="3">
    <location>
        <begin position="313"/>
        <end position="328"/>
    </location>
</feature>
<gene>
    <name evidence="1" type="primary">pdxA</name>
    <name type="ordered locus">YPO0493</name>
    <name type="ordered locus">y3682</name>
    <name type="ordered locus">YP_3686</name>
</gene>
<protein>
    <recommendedName>
        <fullName evidence="1">4-hydroxythreonine-4-phosphate dehydrogenase</fullName>
        <ecNumber evidence="1">1.1.1.262</ecNumber>
    </recommendedName>
    <alternativeName>
        <fullName evidence="1">4-(phosphohydroxy)-L-threonine dehydrogenase</fullName>
    </alternativeName>
</protein>
<reference key="1">
    <citation type="journal article" date="2001" name="Nature">
        <title>Genome sequence of Yersinia pestis, the causative agent of plague.</title>
        <authorList>
            <person name="Parkhill J."/>
            <person name="Wren B.W."/>
            <person name="Thomson N.R."/>
            <person name="Titball R.W."/>
            <person name="Holden M.T.G."/>
            <person name="Prentice M.B."/>
            <person name="Sebaihia M."/>
            <person name="James K.D."/>
            <person name="Churcher C.M."/>
            <person name="Mungall K.L."/>
            <person name="Baker S."/>
            <person name="Basham D."/>
            <person name="Bentley S.D."/>
            <person name="Brooks K."/>
            <person name="Cerdeno-Tarraga A.-M."/>
            <person name="Chillingworth T."/>
            <person name="Cronin A."/>
            <person name="Davies R.M."/>
            <person name="Davis P."/>
            <person name="Dougan G."/>
            <person name="Feltwell T."/>
            <person name="Hamlin N."/>
            <person name="Holroyd S."/>
            <person name="Jagels K."/>
            <person name="Karlyshev A.V."/>
            <person name="Leather S."/>
            <person name="Moule S."/>
            <person name="Oyston P.C.F."/>
            <person name="Quail M.A."/>
            <person name="Rutherford K.M."/>
            <person name="Simmonds M."/>
            <person name="Skelton J."/>
            <person name="Stevens K."/>
            <person name="Whitehead S."/>
            <person name="Barrell B.G."/>
        </authorList>
    </citation>
    <scope>NUCLEOTIDE SEQUENCE [LARGE SCALE GENOMIC DNA]</scope>
    <source>
        <strain>CO-92 / Biovar Orientalis</strain>
    </source>
</reference>
<reference key="2">
    <citation type="journal article" date="2002" name="J. Bacteriol.">
        <title>Genome sequence of Yersinia pestis KIM.</title>
        <authorList>
            <person name="Deng W."/>
            <person name="Burland V."/>
            <person name="Plunkett G. III"/>
            <person name="Boutin A."/>
            <person name="Mayhew G.F."/>
            <person name="Liss P."/>
            <person name="Perna N.T."/>
            <person name="Rose D.J."/>
            <person name="Mau B."/>
            <person name="Zhou S."/>
            <person name="Schwartz D.C."/>
            <person name="Fetherston J.D."/>
            <person name="Lindler L.E."/>
            <person name="Brubaker R.R."/>
            <person name="Plano G.V."/>
            <person name="Straley S.C."/>
            <person name="McDonough K.A."/>
            <person name="Nilles M.L."/>
            <person name="Matson J.S."/>
            <person name="Blattner F.R."/>
            <person name="Perry R.D."/>
        </authorList>
    </citation>
    <scope>NUCLEOTIDE SEQUENCE [LARGE SCALE GENOMIC DNA]</scope>
    <source>
        <strain>KIM10+ / Biovar Mediaevalis</strain>
    </source>
</reference>
<reference key="3">
    <citation type="journal article" date="2004" name="DNA Res.">
        <title>Complete genome sequence of Yersinia pestis strain 91001, an isolate avirulent to humans.</title>
        <authorList>
            <person name="Song Y."/>
            <person name="Tong Z."/>
            <person name="Wang J."/>
            <person name="Wang L."/>
            <person name="Guo Z."/>
            <person name="Han Y."/>
            <person name="Zhang J."/>
            <person name="Pei D."/>
            <person name="Zhou D."/>
            <person name="Qin H."/>
            <person name="Pang X."/>
            <person name="Han Y."/>
            <person name="Zhai J."/>
            <person name="Li M."/>
            <person name="Cui B."/>
            <person name="Qi Z."/>
            <person name="Jin L."/>
            <person name="Dai R."/>
            <person name="Chen F."/>
            <person name="Li S."/>
            <person name="Ye C."/>
            <person name="Du Z."/>
            <person name="Lin W."/>
            <person name="Wang J."/>
            <person name="Yu J."/>
            <person name="Yang H."/>
            <person name="Wang J."/>
            <person name="Huang P."/>
            <person name="Yang R."/>
        </authorList>
    </citation>
    <scope>NUCLEOTIDE SEQUENCE [LARGE SCALE GENOMIC DNA]</scope>
    <source>
        <strain>91001 / Biovar Mediaevalis</strain>
    </source>
</reference>
<organism>
    <name type="scientific">Yersinia pestis</name>
    <dbReference type="NCBI Taxonomy" id="632"/>
    <lineage>
        <taxon>Bacteria</taxon>
        <taxon>Pseudomonadati</taxon>
        <taxon>Pseudomonadota</taxon>
        <taxon>Gammaproteobacteria</taxon>
        <taxon>Enterobacterales</taxon>
        <taxon>Yersiniaceae</taxon>
        <taxon>Yersinia</taxon>
    </lineage>
</organism>
<dbReference type="EC" id="1.1.1.262" evidence="1"/>
<dbReference type="EMBL" id="AL590842">
    <property type="protein sequence ID" value="CAL19173.1"/>
    <property type="molecule type" value="Genomic_DNA"/>
</dbReference>
<dbReference type="EMBL" id="AE009952">
    <property type="protein sequence ID" value="AAM87230.1"/>
    <property type="status" value="ALT_INIT"/>
    <property type="molecule type" value="Genomic_DNA"/>
</dbReference>
<dbReference type="EMBL" id="AE017042">
    <property type="protein sequence ID" value="AAS63834.1"/>
    <property type="status" value="ALT_INIT"/>
    <property type="molecule type" value="Genomic_DNA"/>
</dbReference>
<dbReference type="PIR" id="AC0061">
    <property type="entry name" value="AC0061"/>
</dbReference>
<dbReference type="RefSeq" id="WP_002210489.1">
    <property type="nucleotide sequence ID" value="NZ_WUCM01000024.1"/>
</dbReference>
<dbReference type="RefSeq" id="YP_002345566.1">
    <property type="nucleotide sequence ID" value="NC_003143.1"/>
</dbReference>
<dbReference type="PDB" id="3LXY">
    <property type="method" value="X-ray"/>
    <property type="resolution" value="1.70 A"/>
    <property type="chains" value="A=1-331"/>
</dbReference>
<dbReference type="PDBsum" id="3LXY"/>
<dbReference type="SMR" id="P58719"/>
<dbReference type="STRING" id="214092.YPO0493"/>
<dbReference type="PaxDb" id="214092-YPO0493"/>
<dbReference type="DNASU" id="1148629"/>
<dbReference type="EnsemblBacteria" id="AAS63834">
    <property type="protein sequence ID" value="AAS63834"/>
    <property type="gene ID" value="YP_3686"/>
</dbReference>
<dbReference type="GeneID" id="57974117"/>
<dbReference type="KEGG" id="ype:YPO0493"/>
<dbReference type="KEGG" id="ypk:y3682"/>
<dbReference type="KEGG" id="ypm:YP_3686"/>
<dbReference type="PATRIC" id="fig|214092.21.peg.743"/>
<dbReference type="eggNOG" id="COG1995">
    <property type="taxonomic scope" value="Bacteria"/>
</dbReference>
<dbReference type="HOGENOM" id="CLU_040168_1_0_6"/>
<dbReference type="OrthoDB" id="9801783at2"/>
<dbReference type="UniPathway" id="UPA00244">
    <property type="reaction ID" value="UER00312"/>
</dbReference>
<dbReference type="EvolutionaryTrace" id="P58719"/>
<dbReference type="Proteomes" id="UP000000815">
    <property type="component" value="Chromosome"/>
</dbReference>
<dbReference type="Proteomes" id="UP000001019">
    <property type="component" value="Chromosome"/>
</dbReference>
<dbReference type="Proteomes" id="UP000002490">
    <property type="component" value="Chromosome"/>
</dbReference>
<dbReference type="GO" id="GO:0005737">
    <property type="term" value="C:cytoplasm"/>
    <property type="evidence" value="ECO:0007669"/>
    <property type="project" value="UniProtKB-SubCell"/>
</dbReference>
<dbReference type="GO" id="GO:0050570">
    <property type="term" value="F:4-hydroxythreonine-4-phosphate dehydrogenase activity"/>
    <property type="evidence" value="ECO:0000318"/>
    <property type="project" value="GO_Central"/>
</dbReference>
<dbReference type="GO" id="GO:0050897">
    <property type="term" value="F:cobalt ion binding"/>
    <property type="evidence" value="ECO:0007669"/>
    <property type="project" value="UniProtKB-UniRule"/>
</dbReference>
<dbReference type="GO" id="GO:0000287">
    <property type="term" value="F:magnesium ion binding"/>
    <property type="evidence" value="ECO:0007669"/>
    <property type="project" value="UniProtKB-UniRule"/>
</dbReference>
<dbReference type="GO" id="GO:0051287">
    <property type="term" value="F:NAD binding"/>
    <property type="evidence" value="ECO:0007669"/>
    <property type="project" value="InterPro"/>
</dbReference>
<dbReference type="GO" id="GO:0008270">
    <property type="term" value="F:zinc ion binding"/>
    <property type="evidence" value="ECO:0007669"/>
    <property type="project" value="UniProtKB-UniRule"/>
</dbReference>
<dbReference type="GO" id="GO:0042823">
    <property type="term" value="P:pyridoxal phosphate biosynthetic process"/>
    <property type="evidence" value="ECO:0000318"/>
    <property type="project" value="GO_Central"/>
</dbReference>
<dbReference type="GO" id="GO:0008615">
    <property type="term" value="P:pyridoxine biosynthetic process"/>
    <property type="evidence" value="ECO:0000318"/>
    <property type="project" value="GO_Central"/>
</dbReference>
<dbReference type="Gene3D" id="3.40.718.10">
    <property type="entry name" value="Isopropylmalate Dehydrogenase"/>
    <property type="match status" value="1"/>
</dbReference>
<dbReference type="HAMAP" id="MF_00536">
    <property type="entry name" value="PdxA"/>
    <property type="match status" value="1"/>
</dbReference>
<dbReference type="InterPro" id="IPR037510">
    <property type="entry name" value="PdxA"/>
</dbReference>
<dbReference type="InterPro" id="IPR005255">
    <property type="entry name" value="PdxA_fam"/>
</dbReference>
<dbReference type="NCBIfam" id="TIGR00557">
    <property type="entry name" value="pdxA"/>
    <property type="match status" value="1"/>
</dbReference>
<dbReference type="PANTHER" id="PTHR30004">
    <property type="entry name" value="4-HYDROXYTHREONINE-4-PHOSPHATE DEHYDROGENASE"/>
    <property type="match status" value="1"/>
</dbReference>
<dbReference type="PANTHER" id="PTHR30004:SF5">
    <property type="entry name" value="4-HYDROXYTHREONINE-4-PHOSPHATE DEHYDROGENASE"/>
    <property type="match status" value="1"/>
</dbReference>
<dbReference type="Pfam" id="PF04166">
    <property type="entry name" value="PdxA"/>
    <property type="match status" value="1"/>
</dbReference>
<dbReference type="SUPFAM" id="SSF53659">
    <property type="entry name" value="Isocitrate/Isopropylmalate dehydrogenase-like"/>
    <property type="match status" value="1"/>
</dbReference>
<keyword id="KW-0002">3D-structure</keyword>
<keyword id="KW-0170">Cobalt</keyword>
<keyword id="KW-0963">Cytoplasm</keyword>
<keyword id="KW-0460">Magnesium</keyword>
<keyword id="KW-0479">Metal-binding</keyword>
<keyword id="KW-0520">NAD</keyword>
<keyword id="KW-0521">NADP</keyword>
<keyword id="KW-0560">Oxidoreductase</keyword>
<keyword id="KW-0664">Pyridoxine biosynthesis</keyword>
<keyword id="KW-1185">Reference proteome</keyword>
<keyword id="KW-0862">Zinc</keyword>